<comment type="function">
    <text evidence="1 2 3 4 5 6 7 8 9">Inhibitor of viral RNA replication which confers resistance to some tobamoviruses including tomato mosaic virus (ToMV) (e.g. isolate L), tobacco mosaic virus (TMV), tobacco mild green mosaic virus (TMGMV) and pepper mild mottle virus (PMMoV), but not to resistance-breaking isolates of ToMV (e.g. LT1, SL-1 and ToMV1-2) and tomato brown rugose fruit virus (ToBRFV) (PubMed:17238011, PubMed:17699618, PubMed:19423673, PubMed:23415925, PubMed:28107419, PubMed:29582165, PubMed:3686829). Prevents tobamoviruses RNA replication by affecting the association of tobamoviruses replication proteins (large and small subunits) with host membrane-associated proteins (e.g. TOM1, TOM2A and ARL8), thus inhibiting the replication complex formation on the membranes and avoiding viral negative-strand RNA synthesis (PubMed:17699618, PubMed:19423673, PubMed:23415925, PubMed:23658455). Inhibits triphosphatase activity of ToMV replication proteins (PubMed:25092327).</text>
</comment>
<comment type="subunit">
    <text evidence="6">Homodimer.</text>
</comment>
<comment type="subunit">
    <text evidence="2 3">(Microbial infection) Binds, via an ATP bridge, to the tobamoviruses avirulent (Avr) replication proteins (large and small subunits, e.g. tomato mosaic virus (ToMV/TMV) AC P03587, tobacco mild green mosaic virus (TMGMV) AC P18339 and pepper mild mottle virus (PMMoV) AC P89657) to inhibit their function after the translation of tobamoviruses RNA, but before the viral replication complex formation on the membrane surfaces; this interaction is not possible with resistance-breaking strains replication proteins.</text>
</comment>
<comment type="disruption phenotype">
    <text evidence="2">Increased sensitivity to tobamoviruses (ToMV,TMV).</text>
</comment>
<comment type="miscellaneous">
    <text evidence="3">Transgenic tobacco plants expressing Tm-1 exhibit resistance to tobacco mild green mosaic virus (TMGMV) and pepper mild mottle virus (PMMoV), tobamoviruses that cannot multiply in tomato.</text>
</comment>
<comment type="miscellaneous">
    <text evidence="2">The Tm-1 allele present in the tomato mosaic virus (ToMV/TMV)-resistant tomato cv. Craigella isolate GCR237 (AC A7M6E7) confers resistance to ToMV but not the tm-1 allele present in the ToMV-susceptible tomato cv. Craigella isolate GCR26 (AC A7M6E8).</text>
</comment>
<comment type="similarity">
    <text evidence="12">Belongs to the UPF0261 family.</text>
</comment>
<feature type="chain" id="PRO_0000448712" description="ToMV resistance protein Tm-1(GCR237)">
    <location>
        <begin position="1"/>
        <end position="754"/>
    </location>
</feature>
<feature type="region of interest" description="N-terminal inhibitory domain NN" evidence="11">
    <location>
        <begin position="1"/>
        <end position="201"/>
    </location>
</feature>
<feature type="region of interest" description="N-terminal inhibitory domain NC" evidence="11">
    <location>
        <begin position="211"/>
        <end position="431"/>
    </location>
</feature>
<feature type="binding site" evidence="6 13 14">
    <location>
        <begin position="18"/>
        <end position="20"/>
    </location>
    <ligand>
        <name>ATP</name>
        <dbReference type="ChEBI" id="CHEBI:30616"/>
    </ligand>
</feature>
<feature type="binding site" evidence="6 13 14">
    <location>
        <position position="55"/>
    </location>
    <ligand>
        <name>ATP</name>
        <dbReference type="ChEBI" id="CHEBI:30616"/>
    </ligand>
</feature>
<feature type="binding site" evidence="6 13 14">
    <location>
        <position position="92"/>
    </location>
    <ligand>
        <name>ATP</name>
        <dbReference type="ChEBI" id="CHEBI:30616"/>
    </ligand>
</feature>
<feature type="binding site" evidence="6 13 14">
    <location>
        <begin position="124"/>
        <end position="127"/>
    </location>
    <ligand>
        <name>ATP</name>
        <dbReference type="ChEBI" id="CHEBI:30616"/>
    </ligand>
</feature>
<feature type="sequence variant" description="Greater ability to inhibit tomato mosaic virus (ToMV/TMV) RNA replication and to bind ToMV replication proteins." evidence="6">
    <original>I</original>
    <variation>T</variation>
    <location>
        <position position="91"/>
    </location>
</feature>
<feature type="strand" evidence="17">
    <location>
        <begin position="9"/>
        <end position="15"/>
    </location>
</feature>
<feature type="helix" evidence="17">
    <location>
        <begin position="17"/>
        <end position="38"/>
    </location>
</feature>
<feature type="turn" evidence="17">
    <location>
        <begin position="39"/>
        <end position="41"/>
    </location>
</feature>
<feature type="strand" evidence="17">
    <location>
        <begin position="47"/>
        <end position="52"/>
    </location>
</feature>
<feature type="strand" evidence="17">
    <location>
        <begin position="66"/>
        <end position="69"/>
    </location>
</feature>
<feature type="helix" evidence="17">
    <location>
        <begin position="71"/>
        <end position="75"/>
    </location>
</feature>
<feature type="helix" evidence="17">
    <location>
        <begin position="82"/>
        <end position="84"/>
    </location>
</feature>
<feature type="helix" evidence="17">
    <location>
        <begin position="91"/>
        <end position="112"/>
    </location>
</feature>
<feature type="strand" evidence="17">
    <location>
        <begin position="113"/>
        <end position="124"/>
    </location>
</feature>
<feature type="helix" evidence="17">
    <location>
        <begin position="125"/>
        <end position="135"/>
    </location>
</feature>
<feature type="strand" evidence="17">
    <location>
        <begin position="144"/>
        <end position="148"/>
    </location>
</feature>
<feature type="strand" evidence="17">
    <location>
        <begin position="151"/>
        <end position="154"/>
    </location>
</feature>
<feature type="helix" evidence="17">
    <location>
        <begin position="156"/>
        <end position="159"/>
    </location>
</feature>
<feature type="strand" evidence="17">
    <location>
        <begin position="165"/>
        <end position="168"/>
    </location>
</feature>
<feature type="strand" evidence="15">
    <location>
        <begin position="174"/>
        <end position="176"/>
    </location>
</feature>
<feature type="helix" evidence="17">
    <location>
        <begin position="178"/>
        <end position="199"/>
    </location>
</feature>
<feature type="strand" evidence="17">
    <location>
        <begin position="213"/>
        <end position="218"/>
    </location>
</feature>
<feature type="helix" evidence="17">
    <location>
        <begin position="220"/>
        <end position="222"/>
    </location>
</feature>
<feature type="helix" evidence="17">
    <location>
        <begin position="223"/>
        <end position="235"/>
    </location>
</feature>
<feature type="strand" evidence="17">
    <location>
        <begin position="239"/>
        <end position="244"/>
    </location>
</feature>
<feature type="turn" evidence="17">
    <location>
        <begin position="245"/>
        <end position="247"/>
    </location>
</feature>
<feature type="helix" evidence="17">
    <location>
        <begin position="248"/>
        <end position="258"/>
    </location>
</feature>
<feature type="strand" evidence="17">
    <location>
        <begin position="263"/>
        <end position="267"/>
    </location>
</feature>
<feature type="helix" evidence="17">
    <location>
        <begin position="272"/>
        <end position="278"/>
    </location>
</feature>
<feature type="turn" evidence="17">
    <location>
        <begin position="286"/>
        <end position="289"/>
    </location>
</feature>
<feature type="helix" evidence="17">
    <location>
        <begin position="290"/>
        <end position="295"/>
    </location>
</feature>
<feature type="strand" evidence="17">
    <location>
        <begin position="299"/>
        <end position="301"/>
    </location>
</feature>
<feature type="turn" evidence="17">
    <location>
        <begin position="304"/>
        <end position="307"/>
    </location>
</feature>
<feature type="strand" evidence="17">
    <location>
        <begin position="308"/>
        <end position="310"/>
    </location>
</feature>
<feature type="helix" evidence="17">
    <location>
        <begin position="314"/>
        <end position="316"/>
    </location>
</feature>
<feature type="helix" evidence="17">
    <location>
        <begin position="319"/>
        <end position="321"/>
    </location>
</feature>
<feature type="strand" evidence="16">
    <location>
        <begin position="322"/>
        <end position="324"/>
    </location>
</feature>
<feature type="strand" evidence="17">
    <location>
        <begin position="326"/>
        <end position="328"/>
    </location>
</feature>
<feature type="strand" evidence="17">
    <location>
        <begin position="330"/>
        <end position="332"/>
    </location>
</feature>
<feature type="strand" evidence="17">
    <location>
        <begin position="334"/>
        <end position="337"/>
    </location>
</feature>
<feature type="helix" evidence="17">
    <location>
        <begin position="340"/>
        <end position="354"/>
    </location>
</feature>
<feature type="strand" evidence="17">
    <location>
        <begin position="361"/>
        <end position="371"/>
    </location>
</feature>
<feature type="helix" evidence="17">
    <location>
        <begin position="383"/>
        <end position="397"/>
    </location>
</feature>
<feature type="strand" evidence="17">
    <location>
        <begin position="403"/>
        <end position="411"/>
    </location>
</feature>
<feature type="helix" evidence="17">
    <location>
        <begin position="415"/>
        <end position="428"/>
    </location>
</feature>
<proteinExistence type="evidence at protein level"/>
<protein>
    <recommendedName>
        <fullName evidence="10">ToMV resistance protein Tm-1(GCR237)</fullName>
    </recommendedName>
    <alternativeName>
        <fullName evidence="12">Disease resistance protein Tm-1</fullName>
    </alternativeName>
    <alternativeName>
        <fullName evidence="10">Protein p80(GCR237)</fullName>
    </alternativeName>
</protein>
<gene>
    <name evidence="10" type="primary">Tm-1</name>
</gene>
<accession>A7M6E7</accession>
<reference key="1">
    <citation type="journal article" date="2007" name="Proc. Natl. Acad. Sci. U.S.A.">
        <title>An inhibitor of viral RNA replication is encoded by a plant resistance gene.</title>
        <authorList>
            <person name="Ishibashi K."/>
            <person name="Masuda K."/>
            <person name="Naito S."/>
            <person name="Meshi T."/>
            <person name="Ishikawa M."/>
        </authorList>
    </citation>
    <scope>NUCLEOTIDE SEQUENCE [MRNA]</scope>
    <scope>FUNCTION</scope>
    <scope>DISRUPTION PHENOTYPE</scope>
    <scope>INTERACTION WITH TOMATO MOSAIC VIRUS REPLICATION PROTEINS (MICROBIAL INFECTION)</scope>
    <source>
        <strain>cv. Craigella GCR237</strain>
    </source>
</reference>
<reference key="2">
    <citation type="journal article" date="1987" name="Virology">
        <title>Characterization of Tm-1 gene action on replication of common isolates and a resistance-breaking isolate of TMV.</title>
        <authorList>
            <person name="Watanabe Y."/>
            <person name="Kishibayashi N."/>
            <person name="Motoyoshi F."/>
            <person name="Okada Y."/>
        </authorList>
    </citation>
    <scope>FUNCTION</scope>
</reference>
<reference key="3">
    <citation type="journal article" date="1998" name="Theor. Appl. Genet.">
        <title>Characterization of disease resistance gene-like sequences in near-isogenic lines of tomato.</title>
        <authorList>
            <person name="Ohmori T."/>
            <person name="Murata M."/>
            <person name="Motoyoshi F."/>
        </authorList>
    </citation>
    <scope>GENE FAMILY</scope>
</reference>
<reference key="4">
    <citation type="journal article" date="2007" name="Arch. Virol.">
        <title>The double-resistance-breaking Tomato mosaic virus strain ToMV1-2 contains two independent single resistance-breaking domains.</title>
        <authorList>
            <person name="Strasser M."/>
            <person name="Pfitzner A.J.P."/>
        </authorList>
    </citation>
    <scope>FUNCTION</scope>
    <source>
        <strain>cv. Craigella GCR237</strain>
        <strain>cv. Craigella GCR254</strain>
    </source>
</reference>
<reference key="5">
    <citation type="journal article" date="2009" name="Proc. Natl. Acad. Sci. U.S.A.">
        <title>An inhibitory interaction between viral and cellular proteins underlies the resistance of tomato to nonadapted tobamoviruses.</title>
        <authorList>
            <person name="Ishibashi K."/>
            <person name="Naito S."/>
            <person name="Meshi T."/>
            <person name="Ishikawa M."/>
        </authorList>
    </citation>
    <scope>FUNCTION</scope>
    <scope>MISCELLANEOUS</scope>
    <scope>SUBUNIT</scope>
    <scope>INTERACTION WITH TOBAMOVIRUSES REPLICATION PROTEINS (MICROBIAL INFECTION)</scope>
</reference>
<reference key="6">
    <citation type="journal article" date="2013" name="Acta Crystallogr. F">
        <title>Crystallization and preliminary X-ray crystallographic analysis of the inhibitory domain of the tomato mosaic virus resistance protein Tm-1.</title>
        <authorList>
            <person name="Kato M."/>
            <person name="Kezuka Y."/>
            <person name="Kobayashi C."/>
            <person name="Ishibashi K."/>
            <person name="Nonaka T."/>
            <person name="Ishikawa M."/>
            <person name="Katoh E."/>
        </authorList>
    </citation>
    <scope>CRYSTALLIZATION</scope>
</reference>
<reference key="7">
    <citation type="journal article" date="2013" name="J. Virol.">
        <title>The resistance protein Tm-1 inhibits formation of a Tomato mosaic virus replication protein-host membrane protein complex.</title>
        <authorList>
            <person name="Ishibashi K."/>
            <person name="Ishikawa M."/>
        </authorList>
    </citation>
    <scope>FUNCTION</scope>
</reference>
<reference key="8">
    <citation type="journal article" date="2013" name="Protein Expr. Purif.">
        <title>Expression, purification, and functional characterization of an N-terminal fragment of the tomato mosaic virus resistance protein Tm-1.</title>
        <authorList>
            <person name="Kato M."/>
            <person name="Ishibashi K."/>
            <person name="Kobayashi C."/>
            <person name="Ishikawa M."/>
            <person name="Katoh E."/>
        </authorList>
    </citation>
    <scope>FUNCTION</scope>
</reference>
<reference key="9">
    <citation type="journal article" date="2014" name="Curr. Opin. Virol.">
        <title>Mechanisms of tomato mosaic virus RNA replication and its inhibition by the host resistance factor Tm-1.</title>
        <authorList>
            <person name="Ishibashi K."/>
            <person name="Ishikawa M."/>
        </authorList>
    </citation>
    <scope>REVIEW</scope>
</reference>
<reference key="10">
    <citation type="journal article" date="2017" name="Plant Pathol. J.">
        <title>Experimental infection of different tomato genotypes with tomato mosaic virus led to a low viral population heterogeneity in the capsid protein encoding region.</title>
        <authorList>
            <person name="Sihelska N."/>
            <person name="Vozarova Z."/>
            <person name="Predajna L."/>
            <person name="Soltys K."/>
            <person name="Hudcovicova M."/>
            <person name="Mihalik D."/>
            <person name="Kraic J."/>
            <person name="Mrkvova M."/>
            <person name="Kudela O."/>
            <person name="Glasa M."/>
        </authorList>
    </citation>
    <scope>FUNCTION</scope>
    <source>
        <strain>cv. Mobaci</strain>
    </source>
</reference>
<reference key="11">
    <citation type="journal article" date="2017" name="PLoS ONE">
        <title>A new Israeli tobamovirus isolate infects tomato plants harboring Tm-2(2) resistance genes.</title>
        <authorList>
            <person name="Luria N."/>
            <person name="Smith E."/>
            <person name="Reingold V."/>
            <person name="Bekelman I."/>
            <person name="Lapidot M."/>
            <person name="Levin I."/>
            <person name="Elad N."/>
            <person name="Tam Y."/>
            <person name="Sela N."/>
            <person name="Abu-Ras A."/>
            <person name="Ezra N."/>
            <person name="Haberman A."/>
            <person name="Yitzhak L."/>
            <person name="Lachman O."/>
            <person name="Dombrovsky A."/>
        </authorList>
    </citation>
    <scope>FUNCTION</scope>
    <source>
        <strain>cv. Mocimor</strain>
    </source>
</reference>
<reference key="12">
    <citation type="journal article" date="2018" name="Arch. Virol.">
        <title>Using genomic analysis to identify tomato Tm-2 resistance-breaking mutations and their underlying evolutionary path in a new and emerging tobamovirus.</title>
        <authorList>
            <person name="Maayan Y."/>
            <person name="Pandaranayaka E.P.J."/>
            <person name="Srivastava D.A."/>
            <person name="Lapidot M."/>
            <person name="Levin I."/>
            <person name="Dombrovsky A."/>
            <person name="Harel A."/>
        </authorList>
    </citation>
    <scope>FUNCTION</scope>
</reference>
<reference key="13">
    <citation type="journal article" date="2014" name="Proc. Natl. Acad. Sci. U.S.A.">
        <title>Structural basis for the recognition-evasion arms race between Tomato mosaic virus and the resistance gene Tm-1.</title>
        <authorList>
            <person name="Ishibashi K."/>
            <person name="Kezuka Y."/>
            <person name="Kobayashi C."/>
            <person name="Kato M."/>
            <person name="Inoue T."/>
            <person name="Nonaka T."/>
            <person name="Ishikawa M."/>
            <person name="Matsumura H."/>
            <person name="Katoh E."/>
        </authorList>
    </citation>
    <scope>X-RAY CRYSTALLOGRAPHY (2.30 ANGSTROMS) OF 1-431 IN COMPLEX WITH ATP AND TOMATO MOSAIC VIRUS REPLICATION PROTEINS</scope>
    <scope>FUNCTION</scope>
    <scope>SUBUNIT</scope>
    <scope>VARIANT THR-91</scope>
</reference>
<evidence type="ECO:0000269" key="1">
    <source>
    </source>
</evidence>
<evidence type="ECO:0000269" key="2">
    <source>
    </source>
</evidence>
<evidence type="ECO:0000269" key="3">
    <source>
    </source>
</evidence>
<evidence type="ECO:0000269" key="4">
    <source>
    </source>
</evidence>
<evidence type="ECO:0000269" key="5">
    <source>
    </source>
</evidence>
<evidence type="ECO:0000269" key="6">
    <source>
    </source>
</evidence>
<evidence type="ECO:0000269" key="7">
    <source>
    </source>
</evidence>
<evidence type="ECO:0000269" key="8">
    <source>
    </source>
</evidence>
<evidence type="ECO:0000269" key="9">
    <source>
    </source>
</evidence>
<evidence type="ECO:0000303" key="10">
    <source>
    </source>
</evidence>
<evidence type="ECO:0000303" key="11">
    <source>
    </source>
</evidence>
<evidence type="ECO:0000305" key="12"/>
<evidence type="ECO:0007744" key="13">
    <source>
        <dbReference type="PDB" id="3WRX"/>
    </source>
</evidence>
<evidence type="ECO:0007744" key="14">
    <source>
        <dbReference type="PDB" id="3WRY"/>
    </source>
</evidence>
<evidence type="ECO:0007829" key="15">
    <source>
        <dbReference type="PDB" id="3WRV"/>
    </source>
</evidence>
<evidence type="ECO:0007829" key="16">
    <source>
        <dbReference type="PDB" id="3WRW"/>
    </source>
</evidence>
<evidence type="ECO:0007829" key="17">
    <source>
        <dbReference type="PDB" id="3WRY"/>
    </source>
</evidence>
<name>TM1R_SOLLC</name>
<organism>
    <name type="scientific">Solanum lycopersicum</name>
    <name type="common">Tomato</name>
    <name type="synonym">Lycopersicon esculentum</name>
    <dbReference type="NCBI Taxonomy" id="4081"/>
    <lineage>
        <taxon>Eukaryota</taxon>
        <taxon>Viridiplantae</taxon>
        <taxon>Streptophyta</taxon>
        <taxon>Embryophyta</taxon>
        <taxon>Tracheophyta</taxon>
        <taxon>Spermatophyta</taxon>
        <taxon>Magnoliopsida</taxon>
        <taxon>eudicotyledons</taxon>
        <taxon>Gunneridae</taxon>
        <taxon>Pentapetalae</taxon>
        <taxon>asterids</taxon>
        <taxon>lamiids</taxon>
        <taxon>Solanales</taxon>
        <taxon>Solanaceae</taxon>
        <taxon>Solanoideae</taxon>
        <taxon>Solaneae</taxon>
        <taxon>Solanum</taxon>
        <taxon>Solanum subgen. Lycopersicon</taxon>
    </lineage>
</organism>
<sequence length="754" mass="80571">MATAQSNSPRVFCIGTADTKFDELRFLSEHVRSSLNSFSNKSSFKVGVTVVDVSTSWKETNSCADFDFVPSKDVLSCHTLGEETMGTFADIRGLAIAIMSKALETFLSIANDEQNLAGVIGLGGSGGTSLLSSAFRSLPIGIPKVIISTVASGQTESYIGTSDLVLFPSVVDICGINNVSKVVLSNAGAAFAGMVIGRLESSKEHSITNGKFTVGVTMFGVTTPCVNAVKERLVKEGYETLVFHATGVGGRAMEDLVRGGFIQGVLDITTTEVADYVVGGVMACDSSRFDAILEKKIPLVLSVGALDMVNFGPKTTIPPEFQQRKIHEHNEQVSLMRTTVGENKKFAAFIAEKLNKASSSVCVCLPEKGVSALDAPGKDFYDPEATSCLTRELQMLLENNERCQVKVLPYHINDAEFANALVDSFLEISPKSRHVECQPAESKSIQDIQNDNAVLEKYPSCNGKNFSRLNDFPNAKPETLQKRTVILQKLKDQISKGKPIIGAGAGTGISAKFEEAGGVDLIVLYNSGRFRMAGRGSLAGLLPFADANAIVLEMANEVLPVVKEVAVLAGVCATDPFRRMDNFLKQLESVGFCGVQNFPTVGLFDGNFRQNLEETGMGYGLEVEMIAAAHRMGLLTTPYAFCPDEAVAMAEAGADIIVAHMGLTTSGSIGAKTAVSLEESVTCVQAIADATHRIYPDAIVLCHGGPISSPEEAAYVLKRTTGVHGFYGASSMERLPVEQAITATVQQYKSISME</sequence>
<keyword id="KW-0002">3D-structure</keyword>
<keyword id="KW-0067">ATP-binding</keyword>
<keyword id="KW-0945">Host-virus interaction</keyword>
<keyword id="KW-0547">Nucleotide-binding</keyword>
<keyword id="KW-0611">Plant defense</keyword>
<keyword id="KW-1185">Reference proteome</keyword>
<dbReference type="EMBL" id="AB287296">
    <property type="protein sequence ID" value="BAF75724.1"/>
    <property type="molecule type" value="mRNA"/>
</dbReference>
<dbReference type="PDB" id="3WRV">
    <property type="method" value="X-ray"/>
    <property type="resolution" value="2.75 A"/>
    <property type="chains" value="A/B=1-201"/>
</dbReference>
<dbReference type="PDB" id="3WRW">
    <property type="method" value="X-ray"/>
    <property type="resolution" value="2.71 A"/>
    <property type="chains" value="A/B/C/D/E/F=1-431"/>
</dbReference>
<dbReference type="PDB" id="3WRX">
    <property type="method" value="X-ray"/>
    <property type="resolution" value="2.50 A"/>
    <property type="chains" value="A/B=1-431"/>
</dbReference>
<dbReference type="PDB" id="3WRY">
    <property type="method" value="X-ray"/>
    <property type="resolution" value="2.30 A"/>
    <property type="chains" value="A/B=1-431"/>
</dbReference>
<dbReference type="PDBsum" id="3WRV"/>
<dbReference type="PDBsum" id="3WRW"/>
<dbReference type="PDBsum" id="3WRX"/>
<dbReference type="PDBsum" id="3WRY"/>
<dbReference type="SMR" id="A7M6E7"/>
<dbReference type="FunCoup" id="A7M6E7">
    <property type="interactions" value="752"/>
</dbReference>
<dbReference type="IntAct" id="A7M6E7">
    <property type="interactions" value="2"/>
</dbReference>
<dbReference type="STRING" id="4081.A7M6E7"/>
<dbReference type="InParanoid" id="A7M6E7"/>
<dbReference type="EvolutionaryTrace" id="A7M6E7"/>
<dbReference type="Proteomes" id="UP000004994">
    <property type="component" value="Unplaced"/>
</dbReference>
<dbReference type="ExpressionAtlas" id="A7M6E7">
    <property type="expression patterns" value="baseline and differential"/>
</dbReference>
<dbReference type="GO" id="GO:0005524">
    <property type="term" value="F:ATP binding"/>
    <property type="evidence" value="ECO:0007669"/>
    <property type="project" value="UniProtKB-KW"/>
</dbReference>
<dbReference type="GO" id="GO:0003824">
    <property type="term" value="F:catalytic activity"/>
    <property type="evidence" value="ECO:0007669"/>
    <property type="project" value="InterPro"/>
</dbReference>
<dbReference type="GO" id="GO:0042803">
    <property type="term" value="F:protein homodimerization activity"/>
    <property type="evidence" value="ECO:0000314"/>
    <property type="project" value="UniProtKB"/>
</dbReference>
<dbReference type="GO" id="GO:0051607">
    <property type="term" value="P:defense response to virus"/>
    <property type="evidence" value="ECO:0000314"/>
    <property type="project" value="UniProtKB"/>
</dbReference>
<dbReference type="GO" id="GO:0044830">
    <property type="term" value="P:modulation by host of viral RNA genome replication"/>
    <property type="evidence" value="ECO:0000314"/>
    <property type="project" value="UniProtKB"/>
</dbReference>
<dbReference type="CDD" id="cd15488">
    <property type="entry name" value="Tm-1-like"/>
    <property type="match status" value="1"/>
</dbReference>
<dbReference type="Gene3D" id="3.20.20.70">
    <property type="entry name" value="Aldolase class I"/>
    <property type="match status" value="1"/>
</dbReference>
<dbReference type="Gene3D" id="3.40.50.12030">
    <property type="entry name" value="Uncharacterised protein family UPF0261, NC domain"/>
    <property type="match status" value="1"/>
</dbReference>
<dbReference type="Gene3D" id="3.40.50.12020">
    <property type="entry name" value="Uncharacterised protein family UPF0261, NN domain"/>
    <property type="match status" value="1"/>
</dbReference>
<dbReference type="InterPro" id="IPR013785">
    <property type="entry name" value="Aldolase_TIM"/>
</dbReference>
<dbReference type="InterPro" id="IPR015813">
    <property type="entry name" value="Pyrv/PenolPyrv_kinase-like_dom"/>
</dbReference>
<dbReference type="InterPro" id="IPR009215">
    <property type="entry name" value="TIM-br_IGPS-like"/>
</dbReference>
<dbReference type="InterPro" id="IPR051353">
    <property type="entry name" value="Tobamovirus_resist_UPF0261"/>
</dbReference>
<dbReference type="InterPro" id="IPR056778">
    <property type="entry name" value="UPF0261_C"/>
</dbReference>
<dbReference type="InterPro" id="IPR044122">
    <property type="entry name" value="UPF0261_N"/>
</dbReference>
<dbReference type="NCBIfam" id="NF002674">
    <property type="entry name" value="PRK02399.1-2"/>
    <property type="match status" value="1"/>
</dbReference>
<dbReference type="PANTHER" id="PTHR31862">
    <property type="entry name" value="UPF0261 DOMAIN PROTEIN (AFU_ORTHOLOGUE AFUA_1G10120)"/>
    <property type="match status" value="1"/>
</dbReference>
<dbReference type="PANTHER" id="PTHR31862:SF1">
    <property type="entry name" value="UPF0261 DOMAIN PROTEIN (AFU_ORTHOLOGUE AFUA_1G10120)"/>
    <property type="match status" value="1"/>
</dbReference>
<dbReference type="Pfam" id="PF09370">
    <property type="entry name" value="PEP_hydrolase"/>
    <property type="match status" value="1"/>
</dbReference>
<dbReference type="Pfam" id="PF06792">
    <property type="entry name" value="UPF0261"/>
    <property type="match status" value="1"/>
</dbReference>
<dbReference type="Pfam" id="PF23189">
    <property type="entry name" value="UPF0261_C"/>
    <property type="match status" value="1"/>
</dbReference>
<dbReference type="SUPFAM" id="SSF51621">
    <property type="entry name" value="Phosphoenolpyruvate/pyruvate domain"/>
    <property type="match status" value="1"/>
</dbReference>